<feature type="chain" id="PRO_0000283153" description="FBD-associated F-box protein At5g56370">
    <location>
        <begin position="1"/>
        <end position="421"/>
    </location>
</feature>
<feature type="domain" description="F-box" evidence="1">
    <location>
        <begin position="1"/>
        <end position="52"/>
    </location>
</feature>
<feature type="domain" description="FBD">
    <location>
        <begin position="332"/>
        <end position="382"/>
    </location>
</feature>
<protein>
    <recommendedName>
        <fullName>FBD-associated F-box protein At5g56370</fullName>
    </recommendedName>
</protein>
<reference key="1">
    <citation type="journal article" date="1998" name="DNA Res.">
        <title>Structural analysis of Arabidopsis thaliana chromosome 5. IV. Sequence features of the regions of 1,456,315 bp covered by nineteen physically assigned P1 and TAC clones.</title>
        <authorList>
            <person name="Sato S."/>
            <person name="Kaneko T."/>
            <person name="Kotani H."/>
            <person name="Nakamura Y."/>
            <person name="Asamizu E."/>
            <person name="Miyajima N."/>
            <person name="Tabata S."/>
        </authorList>
    </citation>
    <scope>NUCLEOTIDE SEQUENCE [LARGE SCALE GENOMIC DNA]</scope>
    <source>
        <strain>cv. Columbia</strain>
    </source>
</reference>
<reference key="2">
    <citation type="journal article" date="2017" name="Plant J.">
        <title>Araport11: a complete reannotation of the Arabidopsis thaliana reference genome.</title>
        <authorList>
            <person name="Cheng C.Y."/>
            <person name="Krishnakumar V."/>
            <person name="Chan A.P."/>
            <person name="Thibaud-Nissen F."/>
            <person name="Schobel S."/>
            <person name="Town C.D."/>
        </authorList>
    </citation>
    <scope>GENOME REANNOTATION</scope>
    <source>
        <strain>cv. Columbia</strain>
    </source>
</reference>
<reference key="3">
    <citation type="submission" date="2004-04" db="EMBL/GenBank/DDBJ databases">
        <title>Arabidopsis ORF clones.</title>
        <authorList>
            <person name="Kim C.J."/>
            <person name="Chen H."/>
            <person name="Cheuk R.F."/>
            <person name="Shinn P."/>
            <person name="Carninci P."/>
            <person name="Hayashizaki Y."/>
            <person name="Ishida J."/>
            <person name="Kamiya A."/>
            <person name="Kawai J."/>
            <person name="Narusaka M."/>
            <person name="Sakurai T."/>
            <person name="Satou M."/>
            <person name="Seki M."/>
            <person name="Shinozaki K."/>
            <person name="Ecker J.R."/>
        </authorList>
    </citation>
    <scope>NUCLEOTIDE SEQUENCE [LARGE SCALE MRNA]</scope>
    <source>
        <strain>cv. Columbia</strain>
    </source>
</reference>
<reference key="4">
    <citation type="submission" date="2004-09" db="EMBL/GenBank/DDBJ databases">
        <title>Large-scale analysis of RIKEN Arabidopsis full-length (RAFL) cDNAs.</title>
        <authorList>
            <person name="Totoki Y."/>
            <person name="Seki M."/>
            <person name="Ishida J."/>
            <person name="Nakajima M."/>
            <person name="Enju A."/>
            <person name="Kamiya A."/>
            <person name="Narusaka M."/>
            <person name="Shin-i T."/>
            <person name="Nakagawa M."/>
            <person name="Sakamoto N."/>
            <person name="Oishi K."/>
            <person name="Kohara Y."/>
            <person name="Kobayashi M."/>
            <person name="Toyoda A."/>
            <person name="Sakaki Y."/>
            <person name="Sakurai T."/>
            <person name="Iida K."/>
            <person name="Akiyama K."/>
            <person name="Satou M."/>
            <person name="Toyoda T."/>
            <person name="Konagaya A."/>
            <person name="Carninci P."/>
            <person name="Kawai J."/>
            <person name="Hayashizaki Y."/>
            <person name="Shinozaki K."/>
        </authorList>
    </citation>
    <scope>NUCLEOTIDE SEQUENCE [LARGE SCALE MRNA]</scope>
    <source>
        <strain>cv. Columbia</strain>
    </source>
</reference>
<sequence>MDSISLLPDDFLLRILSLLPTKDVLNTSVLSKRWRYLWKLVPKLQYSLIDKNADHGTFVRFVDRSLLLSMAPVLESLHLKLGRQCSEVDIGFWVRIAVEKGLCELDFDYEHYKTEPCRLPQSLFTCGTLTVLKLKNVSLKDVQFPVCFKLLKTLHLEYVIFLDKETPQKLLSSCPILEVFDLTRDDDDVDNVMSFSVMVPSLQRFIYCGGSGAELVMNTPSLKYLKLSGCGYECMIGNLPEIVEAHVEVACSTDDILTSLASVKRLLLCLPTEPELPTGTIFHQLEHLEFCSCCTEWDILMFMLKHSPKLRSLKLNETHGYTIVSQSDPMFHWEEPSSVPETLMFVLETLEWRNYRGLKMENELASFLLKHSRRLKIATFSPADCKQVRIELRTTVGMKYRILMELARLPRGSAECELVFG</sequence>
<evidence type="ECO:0000255" key="1">
    <source>
        <dbReference type="PROSITE-ProRule" id="PRU00080"/>
    </source>
</evidence>
<gene>
    <name type="ordered locus">At5g56370</name>
    <name type="ORF">MCD7.13</name>
</gene>
<dbReference type="EMBL" id="AB009049">
    <property type="protein sequence ID" value="BAB11265.1"/>
    <property type="molecule type" value="Genomic_DNA"/>
</dbReference>
<dbReference type="EMBL" id="CP002688">
    <property type="protein sequence ID" value="AED96756.1"/>
    <property type="molecule type" value="Genomic_DNA"/>
</dbReference>
<dbReference type="EMBL" id="CP002688">
    <property type="protein sequence ID" value="AED96757.1"/>
    <property type="molecule type" value="Genomic_DNA"/>
</dbReference>
<dbReference type="EMBL" id="BT012557">
    <property type="protein sequence ID" value="AAS99701.1"/>
    <property type="molecule type" value="mRNA"/>
</dbReference>
<dbReference type="EMBL" id="AK176192">
    <property type="protein sequence ID" value="BAD43955.1"/>
    <property type="molecule type" value="mRNA"/>
</dbReference>
<dbReference type="RefSeq" id="NP_200448.1">
    <property type="nucleotide sequence ID" value="NM_125020.5"/>
</dbReference>
<dbReference type="RefSeq" id="NP_974942.1">
    <property type="nucleotide sequence ID" value="NM_203213.2"/>
</dbReference>
<dbReference type="FunCoup" id="Q9FM94">
    <property type="interactions" value="2"/>
</dbReference>
<dbReference type="STRING" id="3702.Q9FM94"/>
<dbReference type="iPTMnet" id="Q9FM94"/>
<dbReference type="PaxDb" id="3702-AT5G56370.1"/>
<dbReference type="EnsemblPlants" id="AT5G56370.1">
    <property type="protein sequence ID" value="AT5G56370.1"/>
    <property type="gene ID" value="AT5G56370"/>
</dbReference>
<dbReference type="EnsemblPlants" id="AT5G56370.2">
    <property type="protein sequence ID" value="AT5G56370.2"/>
    <property type="gene ID" value="AT5G56370"/>
</dbReference>
<dbReference type="GeneID" id="835738"/>
<dbReference type="Gramene" id="AT5G56370.1">
    <property type="protein sequence ID" value="AT5G56370.1"/>
    <property type="gene ID" value="AT5G56370"/>
</dbReference>
<dbReference type="Gramene" id="AT5G56370.2">
    <property type="protein sequence ID" value="AT5G56370.2"/>
    <property type="gene ID" value="AT5G56370"/>
</dbReference>
<dbReference type="KEGG" id="ath:AT5G56370"/>
<dbReference type="Araport" id="AT5G56370"/>
<dbReference type="TAIR" id="AT5G56370"/>
<dbReference type="HOGENOM" id="CLU_010721_1_2_1"/>
<dbReference type="InParanoid" id="Q9FM94"/>
<dbReference type="OMA" id="ECMIEYL"/>
<dbReference type="PhylomeDB" id="Q9FM94"/>
<dbReference type="PRO" id="PR:Q9FM94"/>
<dbReference type="Proteomes" id="UP000006548">
    <property type="component" value="Chromosome 5"/>
</dbReference>
<dbReference type="ExpressionAtlas" id="Q9FM94">
    <property type="expression patterns" value="baseline and differential"/>
</dbReference>
<dbReference type="CDD" id="cd22160">
    <property type="entry name" value="F-box_AtFBL13-like"/>
    <property type="match status" value="1"/>
</dbReference>
<dbReference type="Gene3D" id="1.20.1280.50">
    <property type="match status" value="1"/>
</dbReference>
<dbReference type="Gene3D" id="3.80.10.10">
    <property type="entry name" value="Ribonuclease Inhibitor"/>
    <property type="match status" value="1"/>
</dbReference>
<dbReference type="InterPro" id="IPR036047">
    <property type="entry name" value="F-box-like_dom_sf"/>
</dbReference>
<dbReference type="InterPro" id="IPR053781">
    <property type="entry name" value="F-box_AtFBL13-like"/>
</dbReference>
<dbReference type="InterPro" id="IPR001810">
    <property type="entry name" value="F-box_dom"/>
</dbReference>
<dbReference type="InterPro" id="IPR006566">
    <property type="entry name" value="FBD"/>
</dbReference>
<dbReference type="InterPro" id="IPR050232">
    <property type="entry name" value="FBL13/AtMIF1-like"/>
</dbReference>
<dbReference type="InterPro" id="IPR032675">
    <property type="entry name" value="LRR_dom_sf"/>
</dbReference>
<dbReference type="InterPro" id="IPR055411">
    <property type="entry name" value="LRR_FXL15/At3g58940/PEG3-like"/>
</dbReference>
<dbReference type="PANTHER" id="PTHR31900:SF34">
    <property type="entry name" value="EMB|CAB62440.1-RELATED"/>
    <property type="match status" value="1"/>
</dbReference>
<dbReference type="PANTHER" id="PTHR31900">
    <property type="entry name" value="F-BOX/RNI SUPERFAMILY PROTEIN-RELATED"/>
    <property type="match status" value="1"/>
</dbReference>
<dbReference type="Pfam" id="PF00646">
    <property type="entry name" value="F-box"/>
    <property type="match status" value="1"/>
</dbReference>
<dbReference type="Pfam" id="PF08387">
    <property type="entry name" value="FBD"/>
    <property type="match status" value="1"/>
</dbReference>
<dbReference type="Pfam" id="PF24758">
    <property type="entry name" value="LRR_At5g56370"/>
    <property type="match status" value="1"/>
</dbReference>
<dbReference type="SMART" id="SM00579">
    <property type="entry name" value="FBD"/>
    <property type="match status" value="1"/>
</dbReference>
<dbReference type="SMART" id="SM00256">
    <property type="entry name" value="FBOX"/>
    <property type="match status" value="1"/>
</dbReference>
<dbReference type="SUPFAM" id="SSF81383">
    <property type="entry name" value="F-box domain"/>
    <property type="match status" value="1"/>
</dbReference>
<dbReference type="SUPFAM" id="SSF52047">
    <property type="entry name" value="RNI-like"/>
    <property type="match status" value="1"/>
</dbReference>
<dbReference type="PROSITE" id="PS50181">
    <property type="entry name" value="FBOX"/>
    <property type="match status" value="1"/>
</dbReference>
<keyword id="KW-1185">Reference proteome</keyword>
<proteinExistence type="evidence at transcript level"/>
<accession>Q9FM94</accession>
<name>FBD21_ARATH</name>
<organism>
    <name type="scientific">Arabidopsis thaliana</name>
    <name type="common">Mouse-ear cress</name>
    <dbReference type="NCBI Taxonomy" id="3702"/>
    <lineage>
        <taxon>Eukaryota</taxon>
        <taxon>Viridiplantae</taxon>
        <taxon>Streptophyta</taxon>
        <taxon>Embryophyta</taxon>
        <taxon>Tracheophyta</taxon>
        <taxon>Spermatophyta</taxon>
        <taxon>Magnoliopsida</taxon>
        <taxon>eudicotyledons</taxon>
        <taxon>Gunneridae</taxon>
        <taxon>Pentapetalae</taxon>
        <taxon>rosids</taxon>
        <taxon>malvids</taxon>
        <taxon>Brassicales</taxon>
        <taxon>Brassicaceae</taxon>
        <taxon>Camelineae</taxon>
        <taxon>Arabidopsis</taxon>
    </lineage>
</organism>